<protein>
    <recommendedName>
        <fullName>Conotoxin Cal12.1p5</fullName>
    </recommendedName>
</protein>
<sequence>DLITNSYTRGKPRHVTSWRNLKTRDVCDSLVEGRCIHNGCYCDRSAPHGNCCHTDGCTVAFWCPGTKWD</sequence>
<evidence type="ECO:0000250" key="1"/>
<accession>G1C1T3</accession>
<dbReference type="EMBL" id="JF724081">
    <property type="protein sequence ID" value="AEK21701.1"/>
    <property type="molecule type" value="mRNA"/>
</dbReference>
<dbReference type="GO" id="GO:0005576">
    <property type="term" value="C:extracellular region"/>
    <property type="evidence" value="ECO:0007669"/>
    <property type="project" value="UniProtKB-SubCell"/>
</dbReference>
<dbReference type="GO" id="GO:0090729">
    <property type="term" value="F:toxin activity"/>
    <property type="evidence" value="ECO:0007669"/>
    <property type="project" value="UniProtKB-KW"/>
</dbReference>
<name>CUC15_CONCL</name>
<reference key="1">
    <citation type="submission" date="2011-03" db="EMBL/GenBank/DDBJ databases">
        <title>Conotoxins of Conus californicus.</title>
        <authorList>
            <person name="Elliger C.A."/>
            <person name="Lebaric Z.N."/>
            <person name="Gilly W.F."/>
        </authorList>
    </citation>
    <scope>NUCLEOTIDE SEQUENCE [MRNA]</scope>
    <source>
        <tissue>Venom duct</tissue>
    </source>
</reference>
<keyword id="KW-1015">Disulfide bond</keyword>
<keyword id="KW-0528">Neurotoxin</keyword>
<keyword id="KW-0964">Secreted</keyword>
<keyword id="KW-0800">Toxin</keyword>
<comment type="subcellular location">
    <subcellularLocation>
        <location evidence="1">Secreted</location>
    </subcellularLocation>
</comment>
<comment type="tissue specificity">
    <text>Expressed by the venom duct.</text>
</comment>
<comment type="domain">
    <text>The cysteine framework is XII (C-C-C-C-CC-C-C).</text>
</comment>
<comment type="PTM">
    <text>Contains 4 disulfide bonds.</text>
</comment>
<organism>
    <name type="scientific">Californiconus californicus</name>
    <name type="common">California cone</name>
    <name type="synonym">Conus californicus</name>
    <dbReference type="NCBI Taxonomy" id="1736779"/>
    <lineage>
        <taxon>Eukaryota</taxon>
        <taxon>Metazoa</taxon>
        <taxon>Spiralia</taxon>
        <taxon>Lophotrochozoa</taxon>
        <taxon>Mollusca</taxon>
        <taxon>Gastropoda</taxon>
        <taxon>Caenogastropoda</taxon>
        <taxon>Neogastropoda</taxon>
        <taxon>Conoidea</taxon>
        <taxon>Conidae</taxon>
        <taxon>Californiconus</taxon>
    </lineage>
</organism>
<feature type="propeptide" id="PRO_0000414956" evidence="1">
    <location>
        <begin position="1" status="less than"/>
        <end position="23"/>
    </location>
</feature>
<feature type="peptide" id="PRO_5000785212" description="Conotoxin Cal12.1p5">
    <location>
        <begin position="25"/>
        <end position="69"/>
    </location>
</feature>
<feature type="non-terminal residue">
    <location>
        <position position="1"/>
    </location>
</feature>
<proteinExistence type="evidence at transcript level"/>